<comment type="function">
    <text evidence="1">Binds directly to 16S ribosomal RNA.</text>
</comment>
<comment type="similarity">
    <text evidence="1">Belongs to the bacterial ribosomal protein bS20 family.</text>
</comment>
<keyword id="KW-0687">Ribonucleoprotein</keyword>
<keyword id="KW-0689">Ribosomal protein</keyword>
<keyword id="KW-0694">RNA-binding</keyword>
<keyword id="KW-0699">rRNA-binding</keyword>
<reference key="1">
    <citation type="submission" date="2005-03" db="EMBL/GenBank/DDBJ databases">
        <title>Comparison of the complete genome sequences of Rhodococcus erythropolis PR4 and Rhodococcus opacus B4.</title>
        <authorList>
            <person name="Takarada H."/>
            <person name="Sekine M."/>
            <person name="Hosoyama A."/>
            <person name="Yamada R."/>
            <person name="Fujisawa T."/>
            <person name="Omata S."/>
            <person name="Shimizu A."/>
            <person name="Tsukatani N."/>
            <person name="Tanikawa S."/>
            <person name="Fujita N."/>
            <person name="Harayama S."/>
        </authorList>
    </citation>
    <scope>NUCLEOTIDE SEQUENCE [LARGE SCALE GENOMIC DNA]</scope>
    <source>
        <strain>PR4 / NBRC 100887</strain>
    </source>
</reference>
<evidence type="ECO:0000255" key="1">
    <source>
        <dbReference type="HAMAP-Rule" id="MF_00500"/>
    </source>
</evidence>
<evidence type="ECO:0000305" key="2"/>
<dbReference type="EMBL" id="AP008957">
    <property type="protein sequence ID" value="BAH34475.1"/>
    <property type="molecule type" value="Genomic_DNA"/>
</dbReference>
<dbReference type="RefSeq" id="WP_003944567.1">
    <property type="nucleotide sequence ID" value="NC_012490.1"/>
</dbReference>
<dbReference type="SMR" id="C1A1J0"/>
<dbReference type="GeneID" id="93805281"/>
<dbReference type="KEGG" id="rer:RER_37670"/>
<dbReference type="eggNOG" id="COG0268">
    <property type="taxonomic scope" value="Bacteria"/>
</dbReference>
<dbReference type="HOGENOM" id="CLU_160655_0_1_11"/>
<dbReference type="Proteomes" id="UP000002204">
    <property type="component" value="Chromosome"/>
</dbReference>
<dbReference type="GO" id="GO:0005829">
    <property type="term" value="C:cytosol"/>
    <property type="evidence" value="ECO:0007669"/>
    <property type="project" value="TreeGrafter"/>
</dbReference>
<dbReference type="GO" id="GO:0015935">
    <property type="term" value="C:small ribosomal subunit"/>
    <property type="evidence" value="ECO:0007669"/>
    <property type="project" value="TreeGrafter"/>
</dbReference>
<dbReference type="GO" id="GO:0070181">
    <property type="term" value="F:small ribosomal subunit rRNA binding"/>
    <property type="evidence" value="ECO:0007669"/>
    <property type="project" value="TreeGrafter"/>
</dbReference>
<dbReference type="GO" id="GO:0003735">
    <property type="term" value="F:structural constituent of ribosome"/>
    <property type="evidence" value="ECO:0007669"/>
    <property type="project" value="InterPro"/>
</dbReference>
<dbReference type="GO" id="GO:0006412">
    <property type="term" value="P:translation"/>
    <property type="evidence" value="ECO:0007669"/>
    <property type="project" value="UniProtKB-UniRule"/>
</dbReference>
<dbReference type="FunFam" id="1.20.58.110:FF:000001">
    <property type="entry name" value="30S ribosomal protein S20"/>
    <property type="match status" value="1"/>
</dbReference>
<dbReference type="Gene3D" id="1.20.58.110">
    <property type="entry name" value="Ribosomal protein S20"/>
    <property type="match status" value="1"/>
</dbReference>
<dbReference type="HAMAP" id="MF_00500">
    <property type="entry name" value="Ribosomal_bS20"/>
    <property type="match status" value="1"/>
</dbReference>
<dbReference type="InterPro" id="IPR002583">
    <property type="entry name" value="Ribosomal_bS20"/>
</dbReference>
<dbReference type="InterPro" id="IPR036510">
    <property type="entry name" value="Ribosomal_bS20_sf"/>
</dbReference>
<dbReference type="NCBIfam" id="TIGR00029">
    <property type="entry name" value="S20"/>
    <property type="match status" value="1"/>
</dbReference>
<dbReference type="PANTHER" id="PTHR33398">
    <property type="entry name" value="30S RIBOSOMAL PROTEIN S20"/>
    <property type="match status" value="1"/>
</dbReference>
<dbReference type="PANTHER" id="PTHR33398:SF1">
    <property type="entry name" value="SMALL RIBOSOMAL SUBUNIT PROTEIN BS20C"/>
    <property type="match status" value="1"/>
</dbReference>
<dbReference type="Pfam" id="PF01649">
    <property type="entry name" value="Ribosomal_S20p"/>
    <property type="match status" value="1"/>
</dbReference>
<dbReference type="SUPFAM" id="SSF46992">
    <property type="entry name" value="Ribosomal protein S20"/>
    <property type="match status" value="1"/>
</dbReference>
<feature type="chain" id="PRO_1000206508" description="Small ribosomal subunit protein bS20">
    <location>
        <begin position="1"/>
        <end position="86"/>
    </location>
</feature>
<gene>
    <name evidence="1" type="primary">rpsT</name>
    <name type="ordered locus">RER_37670</name>
</gene>
<organism>
    <name type="scientific">Rhodococcus erythropolis (strain PR4 / NBRC 100887)</name>
    <dbReference type="NCBI Taxonomy" id="234621"/>
    <lineage>
        <taxon>Bacteria</taxon>
        <taxon>Bacillati</taxon>
        <taxon>Actinomycetota</taxon>
        <taxon>Actinomycetes</taxon>
        <taxon>Mycobacteriales</taxon>
        <taxon>Nocardiaceae</taxon>
        <taxon>Rhodococcus</taxon>
        <taxon>Rhodococcus erythropolis group</taxon>
    </lineage>
</organism>
<sequence>MANIKSQVKRIRTNEAARLRNQSVKSSLRTAIRSFREAAAAGDKDKANELLVSTSRKLDKAASKGVIHANQAANKKSALSQAANKL</sequence>
<accession>C1A1J0</accession>
<name>RS20_RHOE4</name>
<proteinExistence type="inferred from homology"/>
<protein>
    <recommendedName>
        <fullName evidence="1">Small ribosomal subunit protein bS20</fullName>
    </recommendedName>
    <alternativeName>
        <fullName evidence="2">30S ribosomal protein S20</fullName>
    </alternativeName>
</protein>